<reference key="1">
    <citation type="submission" date="2001-01" db="EMBL/GenBank/DDBJ databases">
        <authorList>
            <person name="Srinivasan G."/>
            <person name="Paul L."/>
            <person name="Lienard T."/>
            <person name="Gottschalk G."/>
            <person name="Krzycki J.A."/>
        </authorList>
    </citation>
    <scope>NUCLEOTIDE SEQUENCE [GENOMIC DNA]</scope>
</reference>
<dbReference type="EC" id="6.1.1.6" evidence="1"/>
<dbReference type="EMBL" id="AF337056">
    <property type="protein sequence ID" value="AAK29405.1"/>
    <property type="molecule type" value="Genomic_DNA"/>
</dbReference>
<dbReference type="SMR" id="Q9C4B7"/>
<dbReference type="GO" id="GO:0005737">
    <property type="term" value="C:cytoplasm"/>
    <property type="evidence" value="ECO:0007669"/>
    <property type="project" value="UniProtKB-SubCell"/>
</dbReference>
<dbReference type="GO" id="GO:0005524">
    <property type="term" value="F:ATP binding"/>
    <property type="evidence" value="ECO:0007669"/>
    <property type="project" value="UniProtKB-UniRule"/>
</dbReference>
<dbReference type="GO" id="GO:0004824">
    <property type="term" value="F:lysine-tRNA ligase activity"/>
    <property type="evidence" value="ECO:0007669"/>
    <property type="project" value="UniProtKB-UniRule"/>
</dbReference>
<dbReference type="GO" id="GO:0000049">
    <property type="term" value="F:tRNA binding"/>
    <property type="evidence" value="ECO:0007669"/>
    <property type="project" value="InterPro"/>
</dbReference>
<dbReference type="GO" id="GO:0006430">
    <property type="term" value="P:lysyl-tRNA aminoacylation"/>
    <property type="evidence" value="ECO:0007669"/>
    <property type="project" value="UniProtKB-UniRule"/>
</dbReference>
<dbReference type="CDD" id="cd00674">
    <property type="entry name" value="LysRS_core_class_I"/>
    <property type="match status" value="1"/>
</dbReference>
<dbReference type="Gene3D" id="1.10.10.350">
    <property type="match status" value="1"/>
</dbReference>
<dbReference type="Gene3D" id="1.10.10.770">
    <property type="match status" value="1"/>
</dbReference>
<dbReference type="Gene3D" id="3.40.50.620">
    <property type="entry name" value="HUPs"/>
    <property type="match status" value="2"/>
</dbReference>
<dbReference type="Gene3D" id="6.10.20.10">
    <property type="entry name" value="Lysine tRNA ligase, stem contact fold domain"/>
    <property type="match status" value="1"/>
</dbReference>
<dbReference type="HAMAP" id="MF_00177">
    <property type="entry name" value="Lys_tRNA_synth_class1"/>
    <property type="match status" value="1"/>
</dbReference>
<dbReference type="InterPro" id="IPR020751">
    <property type="entry name" value="aa-tRNA-synth_I_codon-bd_sub2"/>
</dbReference>
<dbReference type="InterPro" id="IPR001412">
    <property type="entry name" value="aa-tRNA-synth_I_CS"/>
</dbReference>
<dbReference type="InterPro" id="IPR008925">
    <property type="entry name" value="aa_tRNA-synth_I_cd-bd_sf"/>
</dbReference>
<dbReference type="InterPro" id="IPR002904">
    <property type="entry name" value="Lys-tRNA-ligase"/>
</dbReference>
<dbReference type="InterPro" id="IPR042078">
    <property type="entry name" value="Lys-tRNA-ligase_SC_fold"/>
</dbReference>
<dbReference type="InterPro" id="IPR014729">
    <property type="entry name" value="Rossmann-like_a/b/a_fold"/>
</dbReference>
<dbReference type="NCBIfam" id="TIGR00467">
    <property type="entry name" value="lysS_arch"/>
    <property type="match status" value="1"/>
</dbReference>
<dbReference type="PANTHER" id="PTHR37940">
    <property type="entry name" value="LYSINE--TRNA LIGASE"/>
    <property type="match status" value="1"/>
</dbReference>
<dbReference type="PANTHER" id="PTHR37940:SF1">
    <property type="entry name" value="LYSINE--TRNA LIGASE"/>
    <property type="match status" value="1"/>
</dbReference>
<dbReference type="Pfam" id="PF01921">
    <property type="entry name" value="tRNA-synt_1f"/>
    <property type="match status" value="1"/>
</dbReference>
<dbReference type="SUPFAM" id="SSF48163">
    <property type="entry name" value="An anticodon-binding domain of class I aminoacyl-tRNA synthetases"/>
    <property type="match status" value="1"/>
</dbReference>
<dbReference type="SUPFAM" id="SSF52374">
    <property type="entry name" value="Nucleotidylyl transferase"/>
    <property type="match status" value="1"/>
</dbReference>
<dbReference type="PROSITE" id="PS00178">
    <property type="entry name" value="AA_TRNA_LIGASE_I"/>
    <property type="match status" value="1"/>
</dbReference>
<name>SYK_METBA</name>
<accession>Q9C4B7</accession>
<sequence>MADTIHWADVIAEDVLKKNGKHLVATGITPSGNIHIGNMREVVTADAVYRALVDKGANADFIYIADNYDPLRKVYPFLPESYVEHVGKPISEIPCPCGNCANYAEHFLKPFLEALRRLGINPKVYRADEMYKTGKYTEAIKTALVKRDAIAKILEEVSGKTVASDWSPFNPRCDQCGRITTTKVTGFDLEAETVDYVCACEHSGTVPMAGGGKLTWRVDWPARWSVLGVTVEPFGKDHASRGGSYDTGKRIVKEIFGHEPPYPIVYEWIMLGKQGAMSSSTGVVVSISDMLKIVPPEVLRYLIIRTKPEKHIQFDPGQPLLSLVDEYERLRTQFRENDPSLGTFQGRVYELSRATGVCQSEIPFKQMVTIYQVARGDFDQVLKIVKRSGFSTEDKKCIKELADNVSKWLKLYAPPFAKFKVKEKVPVQAATLSELQRAFLSAFAALIESRDEISGEEYHMLVYSAKDEGSELNRRIAEKLNAHAPQVDPRELFKAIYISLLGQSSGPKAGWFLSSFEKEFLVERFEEASNYSPEINV</sequence>
<evidence type="ECO:0000255" key="1">
    <source>
        <dbReference type="HAMAP-Rule" id="MF_00177"/>
    </source>
</evidence>
<protein>
    <recommendedName>
        <fullName evidence="1">Lysine--tRNA ligase</fullName>
        <ecNumber evidence="1">6.1.1.6</ecNumber>
    </recommendedName>
    <alternativeName>
        <fullName evidence="1">Lysyl-tRNA synthetase</fullName>
        <shortName evidence="1">LysRS</shortName>
    </alternativeName>
</protein>
<gene>
    <name evidence="1" type="primary">lysS</name>
    <name type="synonym">lysK</name>
</gene>
<feature type="chain" id="PRO_0000152752" description="Lysine--tRNA ligase">
    <location>
        <begin position="1"/>
        <end position="537"/>
    </location>
</feature>
<feature type="short sequence motif" description="'HIGH' region">
    <location>
        <begin position="30"/>
        <end position="38"/>
    </location>
</feature>
<feature type="short sequence motif" description="'KMSKS' region">
    <location>
        <begin position="276"/>
        <end position="280"/>
    </location>
</feature>
<organism>
    <name type="scientific">Methanosarcina barkeri</name>
    <dbReference type="NCBI Taxonomy" id="2208"/>
    <lineage>
        <taxon>Archaea</taxon>
        <taxon>Methanobacteriati</taxon>
        <taxon>Methanobacteriota</taxon>
        <taxon>Stenosarchaea group</taxon>
        <taxon>Methanomicrobia</taxon>
        <taxon>Methanosarcinales</taxon>
        <taxon>Methanosarcinaceae</taxon>
        <taxon>Methanosarcina</taxon>
    </lineage>
</organism>
<keyword id="KW-0030">Aminoacyl-tRNA synthetase</keyword>
<keyword id="KW-0067">ATP-binding</keyword>
<keyword id="KW-0963">Cytoplasm</keyword>
<keyword id="KW-0436">Ligase</keyword>
<keyword id="KW-0547">Nucleotide-binding</keyword>
<keyword id="KW-0648">Protein biosynthesis</keyword>
<comment type="catalytic activity">
    <reaction evidence="1">
        <text>tRNA(Lys) + L-lysine + ATP = L-lysyl-tRNA(Lys) + AMP + diphosphate</text>
        <dbReference type="Rhea" id="RHEA:20792"/>
        <dbReference type="Rhea" id="RHEA-COMP:9696"/>
        <dbReference type="Rhea" id="RHEA-COMP:9697"/>
        <dbReference type="ChEBI" id="CHEBI:30616"/>
        <dbReference type="ChEBI" id="CHEBI:32551"/>
        <dbReference type="ChEBI" id="CHEBI:33019"/>
        <dbReference type="ChEBI" id="CHEBI:78442"/>
        <dbReference type="ChEBI" id="CHEBI:78529"/>
        <dbReference type="ChEBI" id="CHEBI:456215"/>
        <dbReference type="EC" id="6.1.1.6"/>
    </reaction>
</comment>
<comment type="subcellular location">
    <subcellularLocation>
        <location evidence="1">Cytoplasm</location>
    </subcellularLocation>
</comment>
<comment type="similarity">
    <text evidence="1">Belongs to the class-I aminoacyl-tRNA synthetase family.</text>
</comment>
<proteinExistence type="inferred from homology"/>